<dbReference type="EC" id="6.1.1.15" evidence="1 4 5"/>
<dbReference type="EMBL" id="AF384553">
    <property type="protein sequence ID" value="AAK62359.1"/>
    <property type="molecule type" value="Genomic_DNA"/>
</dbReference>
<dbReference type="EMBL" id="AP008226">
    <property type="protein sequence ID" value="BAD69938.1"/>
    <property type="molecule type" value="Genomic_DNA"/>
</dbReference>
<dbReference type="RefSeq" id="WP_011227720.1">
    <property type="nucleotide sequence ID" value="NC_006461.1"/>
</dbReference>
<dbReference type="RefSeq" id="YP_143381.1">
    <property type="nucleotide sequence ID" value="NC_006461.1"/>
</dbReference>
<dbReference type="PDB" id="1H4Q">
    <property type="method" value="X-ray"/>
    <property type="resolution" value="3.00 A"/>
    <property type="chains" value="A/B=1-477"/>
</dbReference>
<dbReference type="PDB" id="1H4S">
    <property type="method" value="X-ray"/>
    <property type="resolution" value="2.85 A"/>
    <property type="chains" value="A/B=1-477"/>
</dbReference>
<dbReference type="PDB" id="1H4T">
    <property type="method" value="X-ray"/>
    <property type="resolution" value="2.90 A"/>
    <property type="chains" value="A/B/C/D=1-477"/>
</dbReference>
<dbReference type="PDB" id="1HC7">
    <property type="method" value="X-ray"/>
    <property type="resolution" value="2.43 A"/>
    <property type="chains" value="A/B/C/D=1-477"/>
</dbReference>
<dbReference type="PDBsum" id="1H4Q"/>
<dbReference type="PDBsum" id="1H4S"/>
<dbReference type="PDBsum" id="1H4T"/>
<dbReference type="PDBsum" id="1HC7"/>
<dbReference type="SMR" id="Q5SM28"/>
<dbReference type="EnsemblBacteria" id="BAD69938">
    <property type="protein sequence ID" value="BAD69938"/>
    <property type="gene ID" value="BAD69938"/>
</dbReference>
<dbReference type="GeneID" id="3169620"/>
<dbReference type="KEGG" id="ttj:TTHA0115"/>
<dbReference type="PATRIC" id="fig|300852.9.peg.113"/>
<dbReference type="eggNOG" id="COG0442">
    <property type="taxonomic scope" value="Bacteria"/>
</dbReference>
<dbReference type="HOGENOM" id="CLU_001882_4_2_0"/>
<dbReference type="PhylomeDB" id="Q5SM28"/>
<dbReference type="BRENDA" id="6.1.1.15">
    <property type="organism ID" value="2305"/>
</dbReference>
<dbReference type="SABIO-RK" id="Q5SM28"/>
<dbReference type="EvolutionaryTrace" id="Q5SM28"/>
<dbReference type="Proteomes" id="UP000000532">
    <property type="component" value="Chromosome"/>
</dbReference>
<dbReference type="GO" id="GO:0017101">
    <property type="term" value="C:aminoacyl-tRNA synthetase multienzyme complex"/>
    <property type="evidence" value="ECO:0007669"/>
    <property type="project" value="TreeGrafter"/>
</dbReference>
<dbReference type="GO" id="GO:0005737">
    <property type="term" value="C:cytoplasm"/>
    <property type="evidence" value="ECO:0007669"/>
    <property type="project" value="UniProtKB-SubCell"/>
</dbReference>
<dbReference type="GO" id="GO:0005524">
    <property type="term" value="F:ATP binding"/>
    <property type="evidence" value="ECO:0007669"/>
    <property type="project" value="UniProtKB-UniRule"/>
</dbReference>
<dbReference type="GO" id="GO:0046872">
    <property type="term" value="F:metal ion binding"/>
    <property type="evidence" value="ECO:0007669"/>
    <property type="project" value="UniProtKB-KW"/>
</dbReference>
<dbReference type="GO" id="GO:0004827">
    <property type="term" value="F:proline-tRNA ligase activity"/>
    <property type="evidence" value="ECO:0007669"/>
    <property type="project" value="UniProtKB-UniRule"/>
</dbReference>
<dbReference type="GO" id="GO:0006433">
    <property type="term" value="P:prolyl-tRNA aminoacylation"/>
    <property type="evidence" value="ECO:0007669"/>
    <property type="project" value="UniProtKB-UniRule"/>
</dbReference>
<dbReference type="CDD" id="cd00862">
    <property type="entry name" value="ProRS_anticodon_zinc"/>
    <property type="match status" value="1"/>
</dbReference>
<dbReference type="CDD" id="cd00778">
    <property type="entry name" value="ProRS_core_arch_euk"/>
    <property type="match status" value="1"/>
</dbReference>
<dbReference type="FunFam" id="3.30.930.10:FF:000023">
    <property type="entry name" value="Proline--tRNA ligase"/>
    <property type="match status" value="1"/>
</dbReference>
<dbReference type="Gene3D" id="3.40.50.800">
    <property type="entry name" value="Anticodon-binding domain"/>
    <property type="match status" value="1"/>
</dbReference>
<dbReference type="Gene3D" id="3.30.930.10">
    <property type="entry name" value="Bira Bifunctional Protein, Domain 2"/>
    <property type="match status" value="1"/>
</dbReference>
<dbReference type="Gene3D" id="3.30.110.30">
    <property type="entry name" value="C-terminal domain of ProRS"/>
    <property type="match status" value="1"/>
</dbReference>
<dbReference type="HAMAP" id="MF_01571">
    <property type="entry name" value="Pro_tRNA_synth_type3"/>
    <property type="match status" value="1"/>
</dbReference>
<dbReference type="InterPro" id="IPR002314">
    <property type="entry name" value="aa-tRNA-synt_IIb"/>
</dbReference>
<dbReference type="InterPro" id="IPR006195">
    <property type="entry name" value="aa-tRNA-synth_II"/>
</dbReference>
<dbReference type="InterPro" id="IPR045864">
    <property type="entry name" value="aa-tRNA-synth_II/BPL/LPL"/>
</dbReference>
<dbReference type="InterPro" id="IPR004154">
    <property type="entry name" value="Anticodon-bd"/>
</dbReference>
<dbReference type="InterPro" id="IPR036621">
    <property type="entry name" value="Anticodon-bd_dom_sf"/>
</dbReference>
<dbReference type="InterPro" id="IPR002316">
    <property type="entry name" value="Pro-tRNA-ligase_IIa"/>
</dbReference>
<dbReference type="InterPro" id="IPR004499">
    <property type="entry name" value="Pro-tRNA-ligase_IIa_arc-type"/>
</dbReference>
<dbReference type="InterPro" id="IPR016061">
    <property type="entry name" value="Pro-tRNA_ligase_II_C"/>
</dbReference>
<dbReference type="InterPro" id="IPR017449">
    <property type="entry name" value="Pro-tRNA_synth_II"/>
</dbReference>
<dbReference type="InterPro" id="IPR033721">
    <property type="entry name" value="ProRS_core_arch_euk"/>
</dbReference>
<dbReference type="NCBIfam" id="TIGR00408">
    <property type="entry name" value="proS_fam_I"/>
    <property type="match status" value="1"/>
</dbReference>
<dbReference type="PANTHER" id="PTHR43382:SF2">
    <property type="entry name" value="BIFUNCTIONAL GLUTAMATE_PROLINE--TRNA LIGASE"/>
    <property type="match status" value="1"/>
</dbReference>
<dbReference type="PANTHER" id="PTHR43382">
    <property type="entry name" value="PROLYL-TRNA SYNTHETASE"/>
    <property type="match status" value="1"/>
</dbReference>
<dbReference type="Pfam" id="PF03129">
    <property type="entry name" value="HGTP_anticodon"/>
    <property type="match status" value="1"/>
</dbReference>
<dbReference type="Pfam" id="PF09180">
    <property type="entry name" value="ProRS-C_1"/>
    <property type="match status" value="1"/>
</dbReference>
<dbReference type="Pfam" id="PF00587">
    <property type="entry name" value="tRNA-synt_2b"/>
    <property type="match status" value="1"/>
</dbReference>
<dbReference type="PRINTS" id="PR01046">
    <property type="entry name" value="TRNASYNTHPRO"/>
</dbReference>
<dbReference type="SMART" id="SM00946">
    <property type="entry name" value="ProRS-C_1"/>
    <property type="match status" value="1"/>
</dbReference>
<dbReference type="SUPFAM" id="SSF64586">
    <property type="entry name" value="C-terminal domain of ProRS"/>
    <property type="match status" value="1"/>
</dbReference>
<dbReference type="SUPFAM" id="SSF52954">
    <property type="entry name" value="Class II aaRS ABD-related"/>
    <property type="match status" value="1"/>
</dbReference>
<dbReference type="SUPFAM" id="SSF55681">
    <property type="entry name" value="Class II aaRS and biotin synthetases"/>
    <property type="match status" value="1"/>
</dbReference>
<dbReference type="PROSITE" id="PS50862">
    <property type="entry name" value="AA_TRNA_LIGASE_II"/>
    <property type="match status" value="1"/>
</dbReference>
<name>SYP_THET8</name>
<organism>
    <name type="scientific">Thermus thermophilus (strain ATCC 27634 / DSM 579 / HB8)</name>
    <dbReference type="NCBI Taxonomy" id="300852"/>
    <lineage>
        <taxon>Bacteria</taxon>
        <taxon>Thermotogati</taxon>
        <taxon>Deinococcota</taxon>
        <taxon>Deinococci</taxon>
        <taxon>Thermales</taxon>
        <taxon>Thermaceae</taxon>
        <taxon>Thermus</taxon>
    </lineage>
</organism>
<protein>
    <recommendedName>
        <fullName evidence="1 7">Proline--tRNA ligase</fullName>
        <ecNumber evidence="1 4 5">6.1.1.15</ecNumber>
    </recommendedName>
    <alternativeName>
        <fullName evidence="1 6">Prolyl-tRNA synthetase</fullName>
        <shortName evidence="1 6">ProRS</shortName>
    </alternativeName>
</protein>
<gene>
    <name type="primary">proS</name>
    <name type="ordered locus">TTHA0115</name>
</gene>
<evidence type="ECO:0000255" key="1">
    <source>
        <dbReference type="HAMAP-Rule" id="MF_01571"/>
    </source>
</evidence>
<evidence type="ECO:0000269" key="2">
    <source>
    </source>
</evidence>
<evidence type="ECO:0000269" key="3">
    <source>
    </source>
</evidence>
<evidence type="ECO:0000269" key="4">
    <source>
    </source>
</evidence>
<evidence type="ECO:0000269" key="5">
    <source>
    </source>
</evidence>
<evidence type="ECO:0000303" key="6">
    <source>
    </source>
</evidence>
<evidence type="ECO:0000305" key="7"/>
<evidence type="ECO:0000305" key="8">
    <source>
    </source>
</evidence>
<evidence type="ECO:0007829" key="9">
    <source>
        <dbReference type="PDB" id="1H4Q"/>
    </source>
</evidence>
<evidence type="ECO:0007829" key="10">
    <source>
        <dbReference type="PDB" id="1H4S"/>
    </source>
</evidence>
<evidence type="ECO:0007829" key="11">
    <source>
        <dbReference type="PDB" id="1HC7"/>
    </source>
</evidence>
<proteinExistence type="evidence at protein level"/>
<keyword id="KW-0002">3D-structure</keyword>
<keyword id="KW-0030">Aminoacyl-tRNA synthetase</keyword>
<keyword id="KW-0067">ATP-binding</keyword>
<keyword id="KW-0963">Cytoplasm</keyword>
<keyword id="KW-0436">Ligase</keyword>
<keyword id="KW-0479">Metal-binding</keyword>
<keyword id="KW-0547">Nucleotide-binding</keyword>
<keyword id="KW-0648">Protein biosynthesis</keyword>
<keyword id="KW-1185">Reference proteome</keyword>
<keyword id="KW-0862">Zinc</keyword>
<feature type="chain" id="PRO_0000248229" description="Proline--tRNA ligase">
    <location>
        <begin position="1"/>
        <end position="477"/>
    </location>
</feature>
<feature type="region of interest" description="Interaction with tRNA">
    <location>
        <begin position="340"/>
        <end position="369"/>
    </location>
</feature>
<feature type="binding site" evidence="3">
    <location>
        <position position="111"/>
    </location>
    <ligand>
        <name>L-proline</name>
        <dbReference type="ChEBI" id="CHEBI:60039"/>
    </ligand>
</feature>
<feature type="binding site" evidence="3">
    <location>
        <position position="113"/>
    </location>
    <ligand>
        <name>L-proline</name>
        <dbReference type="ChEBI" id="CHEBI:60039"/>
    </ligand>
</feature>
<feature type="binding site" evidence="8">
    <location>
        <position position="142"/>
    </location>
    <ligand>
        <name>ATP</name>
        <dbReference type="ChEBI" id="CHEBI:30616"/>
    </ligand>
</feature>
<feature type="binding site" evidence="3">
    <location>
        <position position="142"/>
    </location>
    <ligand>
        <name>L-proline</name>
        <dbReference type="ChEBI" id="CHEBI:60039"/>
    </ligand>
</feature>
<feature type="binding site" evidence="8">
    <location>
        <position position="153"/>
    </location>
    <ligand>
        <name>ATP</name>
        <dbReference type="ChEBI" id="CHEBI:30616"/>
    </ligand>
</feature>
<feature type="binding site" evidence="8">
    <location>
        <position position="225"/>
    </location>
    <ligand>
        <name>ATP</name>
        <dbReference type="ChEBI" id="CHEBI:30616"/>
    </ligand>
</feature>
<feature type="binding site" evidence="8">
    <location>
        <position position="228"/>
    </location>
    <ligand>
        <name>ATP</name>
        <dbReference type="ChEBI" id="CHEBI:30616"/>
    </ligand>
</feature>
<feature type="binding site" evidence="3">
    <location>
        <position position="230"/>
    </location>
    <ligand>
        <name>L-proline</name>
        <dbReference type="ChEBI" id="CHEBI:60039"/>
    </ligand>
</feature>
<feature type="binding site" evidence="8">
    <location>
        <position position="262"/>
    </location>
    <ligand>
        <name>ATP</name>
        <dbReference type="ChEBI" id="CHEBI:30616"/>
    </ligand>
</feature>
<feature type="binding site" evidence="8">
    <location>
        <position position="264"/>
    </location>
    <ligand>
        <name>ATP</name>
        <dbReference type="ChEBI" id="CHEBI:30616"/>
    </ligand>
</feature>
<feature type="binding site" evidence="2 3">
    <location>
        <position position="427"/>
    </location>
    <ligand>
        <name>Zn(2+)</name>
        <dbReference type="ChEBI" id="CHEBI:29105"/>
        <note>structural</note>
    </ligand>
</feature>
<feature type="binding site" evidence="2 3">
    <location>
        <position position="432"/>
    </location>
    <ligand>
        <name>Zn(2+)</name>
        <dbReference type="ChEBI" id="CHEBI:29105"/>
        <note>structural</note>
    </ligand>
</feature>
<feature type="binding site" evidence="2 3">
    <location>
        <position position="458"/>
    </location>
    <ligand>
        <name>Zn(2+)</name>
        <dbReference type="ChEBI" id="CHEBI:29105"/>
        <note>structural</note>
    </ligand>
</feature>
<feature type="binding site" evidence="2 3">
    <location>
        <position position="461"/>
    </location>
    <ligand>
        <name>Zn(2+)</name>
        <dbReference type="ChEBI" id="CHEBI:29105"/>
        <note>structural</note>
    </ligand>
</feature>
<feature type="mutagenesis site" description="Slightly reduces the aminoacylation activity." evidence="2">
    <original>Y</original>
    <variation>A</variation>
    <location>
        <position position="477"/>
    </location>
</feature>
<feature type="mutagenesis site" description="Little change in the aminoacylation activity." evidence="2">
    <original>Y</original>
    <variation>F</variation>
    <location>
        <position position="477"/>
    </location>
</feature>
<feature type="helix" evidence="11">
    <location>
        <begin position="10"/>
        <end position="24"/>
    </location>
</feature>
<feature type="strand" evidence="11">
    <location>
        <begin position="27"/>
        <end position="30"/>
    </location>
</feature>
<feature type="strand" evidence="11">
    <location>
        <begin position="37"/>
        <end position="39"/>
    </location>
</feature>
<feature type="helix" evidence="11">
    <location>
        <begin position="41"/>
        <end position="60"/>
    </location>
</feature>
<feature type="strand" evidence="11">
    <location>
        <begin position="70"/>
        <end position="74"/>
    </location>
</feature>
<feature type="helix" evidence="10">
    <location>
        <begin position="81"/>
        <end position="87"/>
    </location>
</feature>
<feature type="helix" evidence="10">
    <location>
        <begin position="88"/>
        <end position="90"/>
    </location>
</feature>
<feature type="strand" evidence="11">
    <location>
        <begin position="92"/>
        <end position="108"/>
    </location>
</feature>
<feature type="helix" evidence="11">
    <location>
        <begin position="113"/>
        <end position="123"/>
    </location>
</feature>
<feature type="helix" evidence="11">
    <location>
        <begin position="127"/>
        <end position="129"/>
    </location>
</feature>
<feature type="strand" evidence="11">
    <location>
        <begin position="132"/>
        <end position="141"/>
    </location>
</feature>
<feature type="turn" evidence="11">
    <location>
        <begin position="149"/>
        <end position="151"/>
    </location>
</feature>
<feature type="strand" evidence="11">
    <location>
        <begin position="154"/>
        <end position="167"/>
    </location>
</feature>
<feature type="helix" evidence="11">
    <location>
        <begin position="168"/>
        <end position="190"/>
    </location>
</feature>
<feature type="strand" evidence="11">
    <location>
        <begin position="195"/>
        <end position="198"/>
    </location>
</feature>
<feature type="turn" evidence="11">
    <location>
        <begin position="201"/>
        <end position="203"/>
    </location>
</feature>
<feature type="strand" evidence="11">
    <location>
        <begin position="208"/>
        <end position="217"/>
    </location>
</feature>
<feature type="strand" evidence="11">
    <location>
        <begin position="223"/>
        <end position="233"/>
    </location>
</feature>
<feature type="helix" evidence="11">
    <location>
        <begin position="235"/>
        <end position="239"/>
    </location>
</feature>
<feature type="strand" evidence="11">
    <location>
        <begin position="243"/>
        <end position="245"/>
    </location>
</feature>
<feature type="strand" evidence="11">
    <location>
        <begin position="251"/>
        <end position="253"/>
    </location>
</feature>
<feature type="strand" evidence="11">
    <location>
        <begin position="255"/>
        <end position="262"/>
    </location>
</feature>
<feature type="helix" evidence="11">
    <location>
        <begin position="264"/>
        <end position="273"/>
    </location>
</feature>
<feature type="strand" evidence="10">
    <location>
        <begin position="278"/>
        <end position="280"/>
    </location>
</feature>
<feature type="turn" evidence="11">
    <location>
        <begin position="283"/>
        <end position="285"/>
    </location>
</feature>
<feature type="strand" evidence="11">
    <location>
        <begin position="289"/>
        <end position="294"/>
    </location>
</feature>
<feature type="turn" evidence="11">
    <location>
        <begin position="298"/>
        <end position="300"/>
    </location>
</feature>
<feature type="helix" evidence="11">
    <location>
        <begin position="301"/>
        <end position="317"/>
    </location>
</feature>
<feature type="strand" evidence="11">
    <location>
        <begin position="322"/>
        <end position="324"/>
    </location>
</feature>
<feature type="strand" evidence="11">
    <location>
        <begin position="328"/>
        <end position="330"/>
    </location>
</feature>
<feature type="helix" evidence="11">
    <location>
        <begin position="332"/>
        <end position="341"/>
    </location>
</feature>
<feature type="strand" evidence="11">
    <location>
        <begin position="345"/>
        <end position="350"/>
    </location>
</feature>
<feature type="helix" evidence="11">
    <location>
        <begin position="352"/>
        <end position="356"/>
    </location>
</feature>
<feature type="strand" evidence="11">
    <location>
        <begin position="359"/>
        <end position="364"/>
    </location>
</feature>
<feature type="turn" evidence="9">
    <location>
        <begin position="365"/>
        <end position="367"/>
    </location>
</feature>
<feature type="strand" evidence="11">
    <location>
        <begin position="371"/>
        <end position="373"/>
    </location>
</feature>
<feature type="helix" evidence="11">
    <location>
        <begin position="374"/>
        <end position="376"/>
    </location>
</feature>
<feature type="helix" evidence="11">
    <location>
        <begin position="377"/>
        <end position="402"/>
    </location>
</feature>
<feature type="strand" evidence="11">
    <location>
        <begin position="404"/>
        <end position="406"/>
    </location>
</feature>
<feature type="helix" evidence="11">
    <location>
        <begin position="410"/>
        <end position="416"/>
    </location>
</feature>
<feature type="turn" evidence="11">
    <location>
        <begin position="417"/>
        <end position="419"/>
    </location>
</feature>
<feature type="strand" evidence="11">
    <location>
        <begin position="420"/>
        <end position="424"/>
    </location>
</feature>
<feature type="helix" evidence="11">
    <location>
        <begin position="430"/>
        <end position="440"/>
    </location>
</feature>
<feature type="strand" evidence="11">
    <location>
        <begin position="443"/>
        <end position="451"/>
    </location>
</feature>
<feature type="turn" evidence="11">
    <location>
        <begin position="459"/>
        <end position="461"/>
    </location>
</feature>
<feature type="strand" evidence="11">
    <location>
        <begin position="471"/>
        <end position="474"/>
    </location>
</feature>
<sequence length="477" mass="54488">MAKEKGLTPQSQDFSEWYLEVIQKAELADYGPVRGTIVVRPYGYAIWENIQQVLDRMFKETGHQNAYFPLFIPMSFLRKEAEHVEGFSPELAVVTHAGGEELEEPLAVRPTSETVIGYMWSKWIRSWRDLPQLLNQWGNVVRWEMRTRPFLRTSEFLWQEGHTAHATREEAEEEVRRMLSIYARLAREYAAIPVIEGLKTEKEKFAGAVYTTTIEALMKDGKALQAGTSHYLGENFARAFDIKFQDRDLQVKYVHTTSWGLSWRFIGAIIMTHGDDRGLVLPPRLAPIQVVIVPIYKDESRERVLEAAQGLRQALLAQGLRVHLDDRDQHTPGYKFHEWELKGVPFRVELGPKDLEGGQAVLASRLGGKETLPLAALPEALPGKLDAFHEELYRRALAFREDHTRKVDTYEAFKEAVQEGFALAFHCGDKACERLIQEETTATTRCVPFEAEPEEGFCVRCGRPSAYGKRVVFAKAY</sequence>
<comment type="function">
    <text evidence="4 5">Catalyzes the attachment of proline to tRNA(Pro) in a two-step reaction: proline is first activated by ATP to form Pro-AMP and then transferred to the acceptor end of tRNA(Pro). Can inadvertently accommodate and process cysteine.</text>
</comment>
<comment type="catalytic activity">
    <reaction evidence="1 4 5">
        <text>tRNA(Pro) + L-proline + ATP = L-prolyl-tRNA(Pro) + AMP + diphosphate</text>
        <dbReference type="Rhea" id="RHEA:14305"/>
        <dbReference type="Rhea" id="RHEA-COMP:9700"/>
        <dbReference type="Rhea" id="RHEA-COMP:9702"/>
        <dbReference type="ChEBI" id="CHEBI:30616"/>
        <dbReference type="ChEBI" id="CHEBI:33019"/>
        <dbReference type="ChEBI" id="CHEBI:60039"/>
        <dbReference type="ChEBI" id="CHEBI:78442"/>
        <dbReference type="ChEBI" id="CHEBI:78532"/>
        <dbReference type="ChEBI" id="CHEBI:456215"/>
        <dbReference type="EC" id="6.1.1.15"/>
    </reaction>
</comment>
<comment type="biophysicochemical properties">
    <kinetics>
        <KM evidence="5">0.15 mM for proline (at 60 degrees Celsius)</KM>
        <KM evidence="5">0.02 mM for cysteine (at 60 degrees Celsius)</KM>
    </kinetics>
</comment>
<comment type="subunit">
    <text evidence="2 3">Homodimer. Only one tRNA molecule binds per dimer.</text>
</comment>
<comment type="subcellular location">
    <subcellularLocation>
        <location evidence="1">Cytoplasm</location>
    </subcellularLocation>
</comment>
<comment type="domain">
    <text>Consists of three domains: the N-terminal catalytic domain, the anticodon-binding domain and the C-terminal extension. The C-terminal extension binds a zinc ion, which probably plays a non-essential structural role in stabilizing the fold of C-terminal domain.</text>
</comment>
<comment type="similarity">
    <text evidence="1 7">Belongs to the class-II aminoacyl-tRNA synthetase family. ProS type 3 subfamily.</text>
</comment>
<accession>Q5SM28</accession>
<accession>Q93N97</accession>
<reference key="1">
    <citation type="submission" date="2001-05" db="EMBL/GenBank/DDBJ databases">
        <title>Aminoacyl-tRNA formation in the hyperthermophile Thermus thermophilus.</title>
        <authorList>
            <person name="Ahel I."/>
            <person name="Stathopoulos C."/>
            <person name="Hartsch T."/>
            <person name="Soell D."/>
        </authorList>
    </citation>
    <scope>NUCLEOTIDE SEQUENCE [GENOMIC DNA]</scope>
</reference>
<reference key="2">
    <citation type="submission" date="2004-11" db="EMBL/GenBank/DDBJ databases">
        <title>Complete genome sequence of Thermus thermophilus HB8.</title>
        <authorList>
            <person name="Masui R."/>
            <person name="Kurokawa K."/>
            <person name="Nakagawa N."/>
            <person name="Tokunaga F."/>
            <person name="Koyama Y."/>
            <person name="Shibata T."/>
            <person name="Oshima T."/>
            <person name="Yokoyama S."/>
            <person name="Yasunaga T."/>
            <person name="Kuramitsu S."/>
        </authorList>
    </citation>
    <scope>NUCLEOTIDE SEQUENCE [LARGE SCALE GENOMIC DNA]</scope>
    <source>
        <strain>ATCC 27634 / DSM 579 / HB8</strain>
    </source>
</reference>
<reference key="3">
    <citation type="journal article" date="2002" name="Extremophiles">
        <title>Aminoacyl-tRNA formation in the extreme thermophile Thermus thermophilus.</title>
        <authorList>
            <person name="Feng L."/>
            <person name="Stathopoulos C."/>
            <person name="Ahel I."/>
            <person name="Mitra A."/>
            <person name="Tumbula-Hansen D."/>
            <person name="Hartsch T."/>
            <person name="Soell D."/>
        </authorList>
    </citation>
    <scope>PROLINE AND CYSTEINE ACTIVATION</scope>
    <scope>FUNCTION</scope>
    <scope>CATALYTIC ACTIVITY</scope>
</reference>
<reference key="4">
    <citation type="journal article" date="2002" name="J. Biol. Chem.">
        <title>Cysteine activation is an inherent in vitro property of prolyl-tRNA synthetases.</title>
        <authorList>
            <person name="Ahel I."/>
            <person name="Stathopoulos C."/>
            <person name="Ambrogelly A."/>
            <person name="Sauerwald A."/>
            <person name="Toogood H."/>
            <person name="Hartsch T."/>
            <person name="Soell D."/>
        </authorList>
    </citation>
    <scope>PROLINE AND CYSTEINE ACTIVATION</scope>
    <scope>FUNCTION</scope>
    <scope>CATALYTIC ACTIVITY</scope>
    <scope>KINETIC PARAMETERS</scope>
</reference>
<reference key="5">
    <citation type="journal article" date="2000" name="EMBO J.">
        <title>Crystal structure of a eukaryote/archaeon-like prolyl-tRNA synthetase and its complex with tRNAPro(CGG).</title>
        <authorList>
            <person name="Yaremchuk A."/>
            <person name="Cusack S."/>
            <person name="Tukalo M."/>
        </authorList>
    </citation>
    <scope>X-RAY CRYSTALLOGRAPHY (2.43 ANGSTROMS) OF APOENZYME AND IN COMPLEX WITH ZINC IONS AND TRNA</scope>
    <scope>MUTAGENESIS OF TYR-477</scope>
    <scope>SUBUNIT</scope>
</reference>
<reference key="6">
    <citation type="journal article" date="2001" name="J. Mol. Biol.">
        <title>A succession of substrate induced conformational changes ensures the amino acid specificity of Thermus thermophilus prolyl-tRNA synthetase: comparison with histidyl-tRNA synthetase.</title>
        <authorList>
            <person name="Yaremchuk A."/>
            <person name="Tukalo M."/>
            <person name="Groetli M."/>
            <person name="Cusack S."/>
        </authorList>
    </citation>
    <scope>X-RAY CRYSTALLOGRAPHY (2.85 ANGSTROMS) IN COMPLEX WITH PROLINE; ZINC IONS</scope>
    <scope>TRNA AND PRO-AMP ANALOGS</scope>
    <scope>SUBUNIT</scope>
</reference>